<sequence length="21" mass="2138">MKRISTTITTTITITTGNGAG</sequence>
<keyword id="KW-0028">Amino-acid biosynthesis</keyword>
<keyword id="KW-0428">Leader peptide</keyword>
<keyword id="KW-1185">Reference proteome</keyword>
<keyword id="KW-0791">Threonine biosynthesis</keyword>
<organism>
    <name type="scientific">Shigella dysenteriae serotype 1 (strain Sd197)</name>
    <dbReference type="NCBI Taxonomy" id="300267"/>
    <lineage>
        <taxon>Bacteria</taxon>
        <taxon>Pseudomonadati</taxon>
        <taxon>Pseudomonadota</taxon>
        <taxon>Gammaproteobacteria</taxon>
        <taxon>Enterobacterales</taxon>
        <taxon>Enterobacteriaceae</taxon>
        <taxon>Shigella</taxon>
    </lineage>
</organism>
<reference key="1">
    <citation type="journal article" date="2005" name="Nucleic Acids Res.">
        <title>Genome dynamics and diversity of Shigella species, the etiologic agents of bacillary dysentery.</title>
        <authorList>
            <person name="Yang F."/>
            <person name="Yang J."/>
            <person name="Zhang X."/>
            <person name="Chen L."/>
            <person name="Jiang Y."/>
            <person name="Yan Y."/>
            <person name="Tang X."/>
            <person name="Wang J."/>
            <person name="Xiong Z."/>
            <person name="Dong J."/>
            <person name="Xue Y."/>
            <person name="Zhu Y."/>
            <person name="Xu X."/>
            <person name="Sun L."/>
            <person name="Chen S."/>
            <person name="Nie H."/>
            <person name="Peng J."/>
            <person name="Xu J."/>
            <person name="Wang Y."/>
            <person name="Yuan Z."/>
            <person name="Wen Y."/>
            <person name="Yao Z."/>
            <person name="Shen Y."/>
            <person name="Qiang B."/>
            <person name="Hou Y."/>
            <person name="Yu J."/>
            <person name="Jin Q."/>
        </authorList>
    </citation>
    <scope>NUCLEOTIDE SEQUENCE [LARGE SCALE GENOMIC DNA]</scope>
    <source>
        <strain>Sd197</strain>
    </source>
</reference>
<feature type="peptide" id="PRO_0000312893" description="thr operon leader peptide">
    <location>
        <begin position="1"/>
        <end position="21"/>
    </location>
</feature>
<accession>Q32KB7</accession>
<protein>
    <recommendedName>
        <fullName evidence="1">thr operon leader peptide</fullName>
    </recommendedName>
    <alternativeName>
        <fullName evidence="1">thr operon attenuator</fullName>
    </alternativeName>
</protein>
<name>LPT_SHIDS</name>
<gene>
    <name evidence="1" type="primary">thrL</name>
    <name type="ordered locus">SDY_0001</name>
</gene>
<dbReference type="EMBL" id="CP000034">
    <property type="protein sequence ID" value="ABB60241.1"/>
    <property type="molecule type" value="Genomic_DNA"/>
</dbReference>
<dbReference type="RefSeq" id="WP_001386572.1">
    <property type="nucleotide sequence ID" value="NC_007606.1"/>
</dbReference>
<dbReference type="RefSeq" id="YP_401729.1">
    <property type="nucleotide sequence ID" value="NC_007606.1"/>
</dbReference>
<dbReference type="STRING" id="300267.SDY_0001"/>
<dbReference type="EnsemblBacteria" id="ABB60241">
    <property type="protein sequence ID" value="ABB60241"/>
    <property type="gene ID" value="SDY_0001"/>
</dbReference>
<dbReference type="GeneID" id="93777441"/>
<dbReference type="KEGG" id="sdy:SDY_0001"/>
<dbReference type="HOGENOM" id="CLU_221491_0_1_6"/>
<dbReference type="Proteomes" id="UP000002716">
    <property type="component" value="Chromosome"/>
</dbReference>
<dbReference type="GO" id="GO:0009088">
    <property type="term" value="P:threonine biosynthetic process"/>
    <property type="evidence" value="ECO:0007669"/>
    <property type="project" value="UniProtKB-UniRule"/>
</dbReference>
<dbReference type="GO" id="GO:0031556">
    <property type="term" value="P:transcriptional attenuation by ribosome"/>
    <property type="evidence" value="ECO:0007669"/>
    <property type="project" value="UniProtKB-UniRule"/>
</dbReference>
<dbReference type="HAMAP" id="MF_01907">
    <property type="entry name" value="Leader_Thr"/>
    <property type="match status" value="1"/>
</dbReference>
<dbReference type="InterPro" id="IPR011720">
    <property type="entry name" value="Thr_lead_pept"/>
</dbReference>
<dbReference type="NCBIfam" id="NF007329">
    <property type="entry name" value="PRK09816.1"/>
    <property type="match status" value="1"/>
</dbReference>
<dbReference type="NCBIfam" id="TIGR02077">
    <property type="entry name" value="thr_lead_pep"/>
    <property type="match status" value="1"/>
</dbReference>
<dbReference type="Pfam" id="PF08254">
    <property type="entry name" value="Leader_Thr"/>
    <property type="match status" value="1"/>
</dbReference>
<evidence type="ECO:0000255" key="1">
    <source>
        <dbReference type="HAMAP-Rule" id="MF_01907"/>
    </source>
</evidence>
<comment type="function">
    <text evidence="1">This protein is involved in control of the biosynthesis of threonine.</text>
</comment>
<comment type="similarity">
    <text evidence="1">Belongs to the thr operon leader peptide family.</text>
</comment>
<proteinExistence type="inferred from homology"/>